<dbReference type="EC" id="3.5.2.15" evidence="1 2 3"/>
<dbReference type="EMBL" id="U66917">
    <property type="protein sequence ID" value="AAK50331.1"/>
    <property type="molecule type" value="Genomic_DNA"/>
</dbReference>
<dbReference type="EMBL" id="JN607164">
    <property type="protein sequence ID" value="AET43038.1"/>
    <property type="molecule type" value="Genomic_DNA"/>
</dbReference>
<dbReference type="EMBL" id="LKAX01000023">
    <property type="protein sequence ID" value="KSW21436.1"/>
    <property type="molecule type" value="Genomic_DNA"/>
</dbReference>
<dbReference type="RefSeq" id="NP_862537.1">
    <property type="nucleotide sequence ID" value="NC_004956.1"/>
</dbReference>
<dbReference type="RefSeq" id="WP_011117191.1">
    <property type="nucleotide sequence ID" value="NZ_CM003636.1"/>
</dbReference>
<dbReference type="PDB" id="4BVQ">
    <property type="method" value="X-ray"/>
    <property type="resolution" value="1.90 A"/>
    <property type="chains" value="A/B=1-363"/>
</dbReference>
<dbReference type="PDB" id="4BVR">
    <property type="method" value="X-ray"/>
    <property type="resolution" value="2.58 A"/>
    <property type="chains" value="A/B=1-363"/>
</dbReference>
<dbReference type="PDB" id="4BVS">
    <property type="method" value="X-ray"/>
    <property type="resolution" value="2.60 A"/>
    <property type="chains" value="A/B=1-363"/>
</dbReference>
<dbReference type="PDB" id="4BVT">
    <property type="method" value="X-ray"/>
    <property type="resolution" value="3.10 A"/>
    <property type="chains" value="A/B=1-363"/>
</dbReference>
<dbReference type="PDBsum" id="4BVQ"/>
<dbReference type="PDBsum" id="4BVR"/>
<dbReference type="PDBsum" id="4BVS"/>
<dbReference type="PDBsum" id="4BVT"/>
<dbReference type="SMR" id="P58329"/>
<dbReference type="BioCyc" id="MetaCyc:MONOMER-13543"/>
<dbReference type="BRENDA" id="3.5.2.15">
    <property type="organism ID" value="5085"/>
</dbReference>
<dbReference type="SABIO-RK" id="P58329"/>
<dbReference type="UniPathway" id="UPA00008">
    <property type="reaction ID" value="UER00502"/>
</dbReference>
<dbReference type="EvolutionaryTrace" id="P58329"/>
<dbReference type="GO" id="GO:0018753">
    <property type="term" value="F:cyanuric acid amidohydrolase activity"/>
    <property type="evidence" value="ECO:0007669"/>
    <property type="project" value="UniProtKB-UniRule"/>
</dbReference>
<dbReference type="GO" id="GO:0046872">
    <property type="term" value="F:metal ion binding"/>
    <property type="evidence" value="ECO:0007669"/>
    <property type="project" value="UniProtKB-UniRule"/>
</dbReference>
<dbReference type="GO" id="GO:0019381">
    <property type="term" value="P:atrazine catabolic process"/>
    <property type="evidence" value="ECO:0007669"/>
    <property type="project" value="UniProtKB-UniRule"/>
</dbReference>
<dbReference type="Gene3D" id="3.30.1330.160">
    <property type="entry name" value="Cyanuric acid hydrolase/Barbituras, RU C"/>
    <property type="match status" value="1"/>
</dbReference>
<dbReference type="Gene3D" id="3.30.1330.170">
    <property type="entry name" value="Cyanuric acid hydrolase/Barbiturase, RU A"/>
    <property type="match status" value="1"/>
</dbReference>
<dbReference type="Gene3D" id="3.30.1330.180">
    <property type="entry name" value="Cyanuric acid hydrolase/Barbiturase, RU B"/>
    <property type="match status" value="1"/>
</dbReference>
<dbReference type="HAMAP" id="MF_01989">
    <property type="entry name" value="Cyc_amidohydrol"/>
    <property type="match status" value="1"/>
</dbReference>
<dbReference type="InterPro" id="IPR014086">
    <property type="entry name" value="AtzD/Barbiturase"/>
</dbReference>
<dbReference type="InterPro" id="IPR043008">
    <property type="entry name" value="AtzD/Barbiturase_RUA"/>
</dbReference>
<dbReference type="InterPro" id="IPR043006">
    <property type="entry name" value="AtzD/Barbiturase_RUB"/>
</dbReference>
<dbReference type="InterPro" id="IPR043007">
    <property type="entry name" value="AtzD/Barbiturase_RUC"/>
</dbReference>
<dbReference type="NCBIfam" id="TIGR02714">
    <property type="entry name" value="amido_AtzD_TrzD"/>
    <property type="match status" value="1"/>
</dbReference>
<dbReference type="Pfam" id="PF09663">
    <property type="entry name" value="Amido_AtzD_TrzD"/>
    <property type="match status" value="1"/>
</dbReference>
<organism>
    <name type="scientific">Pseudomonas sp. (strain ADP)</name>
    <dbReference type="NCBI Taxonomy" id="47660"/>
    <lineage>
        <taxon>Bacteria</taxon>
        <taxon>Pseudomonadati</taxon>
        <taxon>Pseudomonadota</taxon>
        <taxon>Gammaproteobacteria</taxon>
        <taxon>Pseudomonadales</taxon>
        <taxon>Pseudomonadaceae</taxon>
        <taxon>Pseudomonas</taxon>
    </lineage>
</organism>
<name>CAH_PSESD</name>
<geneLocation type="plasmid">
    <name>pADP-1</name>
</geneLocation>
<keyword id="KW-0002">3D-structure</keyword>
<keyword id="KW-0378">Hydrolase</keyword>
<keyword id="KW-0460">Magnesium</keyword>
<keyword id="KW-0479">Metal-binding</keyword>
<keyword id="KW-0614">Plasmid</keyword>
<comment type="function">
    <text evidence="1 2">Responsible for the hydrolysis of cyanuric acid, an intermediate formed during catabolism of s-triazine based compounds in herbicides such as atrazine and polymers such as melamine. Catalyzes the hydrolytic opening of the s-triazine ring of cyanuric acid (2,4,6-trihydroxy-s-triazine) to yield carbon dioxide and carboxybiuret, which spontaneously decarboxylates to biuret.</text>
</comment>
<comment type="catalytic activity">
    <reaction evidence="1 2 3">
        <text>cyanurate + H2O = 1-carboxybiuret + H(+)</text>
        <dbReference type="Rhea" id="RHEA:70363"/>
        <dbReference type="ChEBI" id="CHEBI:15377"/>
        <dbReference type="ChEBI" id="CHEBI:15378"/>
        <dbReference type="ChEBI" id="CHEBI:38028"/>
        <dbReference type="ChEBI" id="CHEBI:142864"/>
        <dbReference type="EC" id="3.5.2.15"/>
    </reaction>
</comment>
<comment type="activity regulation">
    <text evidence="1 3">Inhibited by barbituric acid.</text>
</comment>
<comment type="biophysicochemical properties">
    <kinetics>
        <KM evidence="4">23 uM for cyanuric acid</KM>
        <KM evidence="3">57 uM for cyanuric acid</KM>
        <KM evidence="3">71 uM for N-methylisocyanuric acid</KM>
        <text evidence="3 4">kcat is 73 sec(-1) with cyanuric acid as substrate (PubMed:22730121). kcat is 6.8 sec(-1) with cyanuric acid as substrate and 3.1 sec(-1) with N-methylisocyanuric acid as substrate (PubMed:12788776).</text>
    </kinetics>
    <phDependence>
        <text evidence="3">Optimum pH is 8.2.</text>
    </phDependence>
</comment>
<comment type="pathway">
    <text evidence="1 2">Xenobiotic degradation; atrazine degradation; biuret from cyanurate: step 1/1.</text>
</comment>
<comment type="subunit">
    <text evidence="1 5">Homotetramer.</text>
</comment>
<comment type="domain">
    <text evidence="1 7">The monomer structure is formed from three repeating units (RUs) that share the same structure as one another. The monomer, the active site and substrate all possess threefold rotational symmetry, to the extent that the active site possesses three potential Ser-Lys catalytic dyads. It is possible that any or all of the three active-site serines may act as nucleophile (albeit only one can do so per catalytic cycle).</text>
</comment>
<comment type="similarity">
    <text evidence="1 6">Belongs to the cyclic amide hydrolase (CyAH) family.</text>
</comment>
<accession>P58329</accession>
<accession>G8HMW5</accession>
<evidence type="ECO:0000255" key="1">
    <source>
        <dbReference type="HAMAP-Rule" id="MF_01989"/>
    </source>
</evidence>
<evidence type="ECO:0000269" key="2">
    <source>
    </source>
</evidence>
<evidence type="ECO:0000269" key="3">
    <source>
    </source>
</evidence>
<evidence type="ECO:0000269" key="4">
    <source>
    </source>
</evidence>
<evidence type="ECO:0000269" key="5">
    <source>
    </source>
</evidence>
<evidence type="ECO:0000305" key="6"/>
<evidence type="ECO:0000305" key="7">
    <source>
    </source>
</evidence>
<evidence type="ECO:0007829" key="8">
    <source>
        <dbReference type="PDB" id="4BVQ"/>
    </source>
</evidence>
<sequence>MYHIDVFRIPCHSPGDTSGLEDLIETGRVAPADIVAVMGKTEGNGCVNDYTREYATAMLAACLGRHLQLPPHEVEKRVAFVMSGGTEGVLSPHHTVFARRPAIDAHRPAGKRLTLGIAFTRDFLPEEIGRHAQITETAGAVKRAMRDAGIASIDDLHFVQVKCPLLTPAKIASARSRGCAPVTTDTYESMGYSRGASALGIALATEEVPSSMLVDESVLNDWSLSSSLASASAGIELEHNVVIAIGMSEQATSELVIAHGVMSDAIDAASVRRTIESLGIRSDDEMDRIVNVFAKAEASPDGVVRGMRHTMLSDSDINSTRHARAVTGAAIASVVGHGMVYVSGGAEHQGPAGGGPFAVIARA</sequence>
<feature type="chain" id="PRO_0000064761" description="Cyanuric acid amidohydrolase">
    <location>
        <begin position="1"/>
        <end position="363"/>
    </location>
</feature>
<feature type="region of interest" description="RU A" evidence="1">
    <location>
        <begin position="1"/>
        <end position="104"/>
    </location>
</feature>
<feature type="region of interest" description="RU B" evidence="1">
    <location>
        <begin position="112"/>
        <end position="249"/>
    </location>
</feature>
<feature type="region of interest" description="RU C" evidence="1">
    <location>
        <begin position="255"/>
        <end position="363"/>
    </location>
</feature>
<feature type="active site" evidence="1">
    <location>
        <position position="162"/>
    </location>
</feature>
<feature type="active site" description="Nucleophile" evidence="1">
    <location>
        <position position="232"/>
    </location>
</feature>
<feature type="binding site" evidence="1 5">
    <location>
        <position position="52"/>
    </location>
    <ligand>
        <name>substrate</name>
    </ligand>
</feature>
<feature type="binding site" evidence="1 5">
    <location>
        <begin position="83"/>
        <end position="84"/>
    </location>
    <ligand>
        <name>substrate</name>
    </ligand>
</feature>
<feature type="binding site" evidence="1 5">
    <location>
        <position position="194"/>
    </location>
    <ligand>
        <name>substrate</name>
    </ligand>
</feature>
<feature type="binding site" evidence="1 5">
    <location>
        <begin position="232"/>
        <end position="233"/>
    </location>
    <ligand>
        <name>substrate</name>
    </ligand>
</feature>
<feature type="binding site" evidence="1 5">
    <location>
        <position position="297"/>
    </location>
    <ligand>
        <name>Mg(2+)</name>
        <dbReference type="ChEBI" id="CHEBI:18420"/>
        <note>structural</note>
    </ligand>
</feature>
<feature type="binding site" evidence="1 5">
    <location>
        <position position="324"/>
    </location>
    <ligand>
        <name>substrate</name>
    </ligand>
</feature>
<feature type="binding site" evidence="1 5">
    <location>
        <begin position="343"/>
        <end position="344"/>
    </location>
    <ligand>
        <name>substrate</name>
    </ligand>
</feature>
<feature type="binding site" evidence="1 5">
    <location>
        <position position="346"/>
    </location>
    <ligand>
        <name>Mg(2+)</name>
        <dbReference type="ChEBI" id="CHEBI:18420"/>
        <note>structural</note>
    </ligand>
</feature>
<feature type="binding site" evidence="1 5">
    <location>
        <position position="349"/>
    </location>
    <ligand>
        <name>Mg(2+)</name>
        <dbReference type="ChEBI" id="CHEBI:18420"/>
        <note>structural</note>
    </ligand>
</feature>
<feature type="binding site" evidence="1 5">
    <location>
        <position position="350"/>
    </location>
    <ligand>
        <name>Mg(2+)</name>
        <dbReference type="ChEBI" id="CHEBI:18420"/>
        <note>structural</note>
    </ligand>
</feature>
<feature type="binding site" evidence="1 5">
    <location>
        <position position="351"/>
    </location>
    <ligand>
        <name>Mg(2+)</name>
        <dbReference type="ChEBI" id="CHEBI:18420"/>
        <note>structural</note>
    </ligand>
</feature>
<feature type="binding site" evidence="1 5">
    <location>
        <position position="354"/>
    </location>
    <ligand>
        <name>Mg(2+)</name>
        <dbReference type="ChEBI" id="CHEBI:18420"/>
        <note>structural</note>
    </ligand>
</feature>
<feature type="site" description="Important for substrate specificity" evidence="1 7">
    <location>
        <position position="320"/>
    </location>
</feature>
<feature type="strand" evidence="8">
    <location>
        <begin position="2"/>
        <end position="10"/>
    </location>
</feature>
<feature type="helix" evidence="8">
    <location>
        <begin position="18"/>
        <end position="25"/>
    </location>
</feature>
<feature type="helix" evidence="8">
    <location>
        <begin position="31"/>
        <end position="33"/>
    </location>
</feature>
<feature type="strand" evidence="8">
    <location>
        <begin position="34"/>
        <end position="43"/>
    </location>
</feature>
<feature type="helix" evidence="8">
    <location>
        <begin position="51"/>
        <end position="67"/>
    </location>
</feature>
<feature type="helix" evidence="8">
    <location>
        <begin position="71"/>
        <end position="77"/>
    </location>
</feature>
<feature type="strand" evidence="8">
    <location>
        <begin position="78"/>
        <end position="84"/>
    </location>
</feature>
<feature type="strand" evidence="8">
    <location>
        <begin position="93"/>
        <end position="101"/>
    </location>
</feature>
<feature type="strand" evidence="8">
    <location>
        <begin position="112"/>
        <end position="119"/>
    </location>
</feature>
<feature type="helix" evidence="8">
    <location>
        <begin position="125"/>
        <end position="127"/>
    </location>
</feature>
<feature type="helix" evidence="8">
    <location>
        <begin position="131"/>
        <end position="148"/>
    </location>
</feature>
<feature type="helix" evidence="8">
    <location>
        <begin position="153"/>
        <end position="155"/>
    </location>
</feature>
<feature type="strand" evidence="8">
    <location>
        <begin position="156"/>
        <end position="163"/>
    </location>
</feature>
<feature type="helix" evidence="8">
    <location>
        <begin position="168"/>
        <end position="176"/>
    </location>
</feature>
<feature type="helix" evidence="8">
    <location>
        <begin position="186"/>
        <end position="204"/>
    </location>
</feature>
<feature type="helix" evidence="8">
    <location>
        <begin position="210"/>
        <end position="212"/>
    </location>
</feature>
<feature type="helix" evidence="8">
    <location>
        <begin position="215"/>
        <end position="217"/>
    </location>
</feature>
<feature type="turn" evidence="8">
    <location>
        <begin position="218"/>
        <end position="220"/>
    </location>
</feature>
<feature type="strand" evidence="8">
    <location>
        <begin position="226"/>
        <end position="233"/>
    </location>
</feature>
<feature type="strand" evidence="8">
    <location>
        <begin position="241"/>
        <end position="248"/>
    </location>
</feature>
<feature type="strand" evidence="8">
    <location>
        <begin position="254"/>
        <end position="264"/>
    </location>
</feature>
<feature type="helix" evidence="8">
    <location>
        <begin position="268"/>
        <end position="277"/>
    </location>
</feature>
<feature type="helix" evidence="8">
    <location>
        <begin position="283"/>
        <end position="288"/>
    </location>
</feature>
<feature type="strand" evidence="8">
    <location>
        <begin position="289"/>
        <end position="296"/>
    </location>
</feature>
<feature type="strand" evidence="8">
    <location>
        <begin position="302"/>
        <end position="304"/>
    </location>
</feature>
<feature type="turn" evidence="8">
    <location>
        <begin position="311"/>
        <end position="313"/>
    </location>
</feature>
<feature type="strand" evidence="8">
    <location>
        <begin position="315"/>
        <end position="317"/>
    </location>
</feature>
<feature type="helix" evidence="8">
    <location>
        <begin position="319"/>
        <end position="335"/>
    </location>
</feature>
<feature type="strand" evidence="8">
    <location>
        <begin position="336"/>
        <end position="338"/>
    </location>
</feature>
<feature type="strand" evidence="8">
    <location>
        <begin position="340"/>
        <end position="344"/>
    </location>
</feature>
<feature type="strand" evidence="8">
    <location>
        <begin position="349"/>
        <end position="351"/>
    </location>
</feature>
<feature type="strand" evidence="8">
    <location>
        <begin position="355"/>
        <end position="362"/>
    </location>
</feature>
<reference key="1">
    <citation type="journal article" date="2001" name="J. Bacteriol.">
        <title>Complete nucleotide sequence and organization of the atrazine catabolic plasmid pADP-1 from Pseudomonas sp. strain ADP.</title>
        <authorList>
            <person name="Martinez B."/>
            <person name="Tomkins J."/>
            <person name="Wackett L.P."/>
            <person name="Wing R."/>
            <person name="Sadowsky M.J."/>
        </authorList>
    </citation>
    <scope>NUCLEOTIDE SEQUENCE [GENOMIC DNA]</scope>
    <scope>FUNCTION</scope>
    <scope>CATALYTIC ACTIVITY</scope>
    <scope>PATHWAY</scope>
    <source>
        <strain>ADP</strain>
    </source>
</reference>
<reference key="2">
    <citation type="journal article" date="2011" name="Gene">
        <title>In vitro evolution of an atrazine-degrading population under cyanuric acid selection pressure: Evidence for the selective loss of a 47kb region on the plasmid ADP1 containing the atzA, B and C genes.</title>
        <authorList>
            <person name="Changey F."/>
            <person name="Devers-Lamrani M."/>
            <person name="Rouard N."/>
            <person name="Martin-Laurent F."/>
        </authorList>
    </citation>
    <scope>NUCLEOTIDE SEQUENCE [GENOMIC DNA]</scope>
    <source>
        <strain>ADPE</strain>
    </source>
</reference>
<reference key="3">
    <citation type="journal article" date="2016" name="Genome Announc.">
        <title>Draft Genome Sequence of Pseudomonas sp. Strain ADP, a Bacterial Model for Studying the Degradation of the Herbicide Atrazine.</title>
        <authorList>
            <person name="Devers-Lamrani M."/>
            <person name="Spor A."/>
            <person name="Mounier A."/>
            <person name="Martin-Laurent F."/>
        </authorList>
    </citation>
    <scope>NUCLEOTIDE SEQUENCE [LARGE SCALE GENOMIC DNA]</scope>
    <source>
        <strain>ADP</strain>
    </source>
</reference>
<reference key="4">
    <citation type="journal article" date="2003" name="Appl. Environ. Microbiol.">
        <title>On the origins of cyanuric acid hydrolase: purification, substrates, and prevalence of AtzD from Pseudomonas sp. strain ADP.</title>
        <authorList>
            <person name="Fruchey I."/>
            <person name="Shapir N."/>
            <person name="Sadowsky M.J."/>
            <person name="Wackett L.P."/>
        </authorList>
    </citation>
    <scope>FUNCTION</scope>
    <scope>BIOPHYSICOCHEMICAL PROPERTIES</scope>
    <scope>ACTIVITY REGULATION</scope>
    <source>
        <strain>ADP</strain>
    </source>
</reference>
<reference key="5">
    <citation type="journal article" date="2012" name="J. Bacteriol.">
        <title>Defining sequence space and reaction products within the cyanuric acid hydrolase (AtzD)/barbiturase protein family.</title>
        <authorList>
            <person name="Seffernick J.L."/>
            <person name="Erickson J.S."/>
            <person name="Cameron S.M."/>
            <person name="Cho S."/>
            <person name="Dodge A.G."/>
            <person name="Richman J.E."/>
            <person name="Sadowsky M.J."/>
            <person name="Wackett L.P."/>
        </authorList>
    </citation>
    <scope>BIOPHYSICOCHEMICAL PROPERTIES</scope>
</reference>
<reference key="6">
    <citation type="journal article" date="2013" name="Mol. Microbiol.">
        <title>Cyanuric acid hydrolase: evolutionary innovation by structural concatenation.</title>
        <authorList>
            <person name="Peat T.S."/>
            <person name="Balotra S."/>
            <person name="Wilding M."/>
            <person name="French N.G."/>
            <person name="Briggs L.J."/>
            <person name="Panjikar S."/>
            <person name="Cowieson N."/>
            <person name="Newman J."/>
            <person name="Scott C."/>
        </authorList>
    </citation>
    <scope>X-RAY CRYSTALLOGRAPHY (1.90 ANGSTROMS) IN COMPLEX WITH METAL ION; SUBSTRATE AND INHIBITOR</scope>
    <scope>BIOPHYSICOCHEMICAL PROPERTIES</scope>
    <scope>SUBUNIT</scope>
</reference>
<proteinExistence type="evidence at protein level"/>
<protein>
    <recommendedName>
        <fullName evidence="1">Cyanuric acid amidohydrolase</fullName>
        <shortName evidence="1">CAH</shortName>
        <ecNumber evidence="1 2 3">3.5.2.15</ecNumber>
    </recommendedName>
</protein>
<gene>
    <name type="primary">atzD</name>
    <name type="ORF">AOX63_31675</name>
</gene>